<feature type="chain" id="PRO_0000262787" description="4-hydroxybenzoate octaprenyltransferase">
    <location>
        <begin position="1"/>
        <end position="287"/>
    </location>
</feature>
<feature type="transmembrane region" description="Helical" evidence="1">
    <location>
        <begin position="41"/>
        <end position="61"/>
    </location>
</feature>
<feature type="transmembrane region" description="Helical" evidence="1">
    <location>
        <begin position="92"/>
        <end position="112"/>
    </location>
</feature>
<feature type="transmembrane region" description="Helical" evidence="1">
    <location>
        <begin position="133"/>
        <end position="153"/>
    </location>
</feature>
<feature type="transmembrane region" description="Helical" evidence="1">
    <location>
        <begin position="160"/>
        <end position="180"/>
    </location>
</feature>
<feature type="transmembrane region" description="Helical" evidence="1">
    <location>
        <begin position="218"/>
        <end position="238"/>
    </location>
</feature>
<feature type="transmembrane region" description="Helical" evidence="1">
    <location>
        <begin position="267"/>
        <end position="287"/>
    </location>
</feature>
<keyword id="KW-0997">Cell inner membrane</keyword>
<keyword id="KW-1003">Cell membrane</keyword>
<keyword id="KW-0460">Magnesium</keyword>
<keyword id="KW-0472">Membrane</keyword>
<keyword id="KW-1185">Reference proteome</keyword>
<keyword id="KW-0808">Transferase</keyword>
<keyword id="KW-0812">Transmembrane</keyword>
<keyword id="KW-1133">Transmembrane helix</keyword>
<keyword id="KW-0831">Ubiquinone biosynthesis</keyword>
<dbReference type="EC" id="2.5.1.39" evidence="1"/>
<dbReference type="EMBL" id="CP000270">
    <property type="protein sequence ID" value="ABE29016.1"/>
    <property type="molecule type" value="Genomic_DNA"/>
</dbReference>
<dbReference type="RefSeq" id="WP_011486839.1">
    <property type="nucleotide sequence ID" value="NC_007951.1"/>
</dbReference>
<dbReference type="SMR" id="Q145H3"/>
<dbReference type="STRING" id="266265.Bxe_A3983"/>
<dbReference type="KEGG" id="bxb:DR64_1659"/>
<dbReference type="KEGG" id="bxe:Bxe_A3983"/>
<dbReference type="PATRIC" id="fig|266265.5.peg.506"/>
<dbReference type="eggNOG" id="COG0382">
    <property type="taxonomic scope" value="Bacteria"/>
</dbReference>
<dbReference type="OrthoDB" id="9782418at2"/>
<dbReference type="UniPathway" id="UPA00232"/>
<dbReference type="Proteomes" id="UP000001817">
    <property type="component" value="Chromosome 1"/>
</dbReference>
<dbReference type="GO" id="GO:0005886">
    <property type="term" value="C:plasma membrane"/>
    <property type="evidence" value="ECO:0007669"/>
    <property type="project" value="UniProtKB-SubCell"/>
</dbReference>
<dbReference type="GO" id="GO:0008412">
    <property type="term" value="F:4-hydroxybenzoate polyprenyltransferase activity"/>
    <property type="evidence" value="ECO:0007669"/>
    <property type="project" value="UniProtKB-UniRule"/>
</dbReference>
<dbReference type="GO" id="GO:0006744">
    <property type="term" value="P:ubiquinone biosynthetic process"/>
    <property type="evidence" value="ECO:0007669"/>
    <property type="project" value="UniProtKB-UniRule"/>
</dbReference>
<dbReference type="CDD" id="cd13959">
    <property type="entry name" value="PT_UbiA_COQ2"/>
    <property type="match status" value="1"/>
</dbReference>
<dbReference type="FunFam" id="1.10.357.140:FF:000002">
    <property type="entry name" value="4-hydroxybenzoate octaprenyltransferase"/>
    <property type="match status" value="1"/>
</dbReference>
<dbReference type="FunFam" id="1.20.120.1780:FF:000001">
    <property type="entry name" value="4-hydroxybenzoate octaprenyltransferase"/>
    <property type="match status" value="1"/>
</dbReference>
<dbReference type="Gene3D" id="1.10.357.140">
    <property type="entry name" value="UbiA prenyltransferase"/>
    <property type="match status" value="1"/>
</dbReference>
<dbReference type="Gene3D" id="1.20.120.1780">
    <property type="entry name" value="UbiA prenyltransferase"/>
    <property type="match status" value="1"/>
</dbReference>
<dbReference type="HAMAP" id="MF_01635">
    <property type="entry name" value="UbiA"/>
    <property type="match status" value="1"/>
</dbReference>
<dbReference type="InterPro" id="IPR006370">
    <property type="entry name" value="HB_polyprenyltransferase-like"/>
</dbReference>
<dbReference type="InterPro" id="IPR039653">
    <property type="entry name" value="Prenyltransferase"/>
</dbReference>
<dbReference type="InterPro" id="IPR000537">
    <property type="entry name" value="UbiA_prenyltransferase"/>
</dbReference>
<dbReference type="InterPro" id="IPR030470">
    <property type="entry name" value="UbiA_prenylTrfase_CS"/>
</dbReference>
<dbReference type="InterPro" id="IPR044878">
    <property type="entry name" value="UbiA_sf"/>
</dbReference>
<dbReference type="NCBIfam" id="TIGR01474">
    <property type="entry name" value="ubiA_proteo"/>
    <property type="match status" value="1"/>
</dbReference>
<dbReference type="PANTHER" id="PTHR11048:SF28">
    <property type="entry name" value="4-HYDROXYBENZOATE POLYPRENYLTRANSFERASE, MITOCHONDRIAL"/>
    <property type="match status" value="1"/>
</dbReference>
<dbReference type="PANTHER" id="PTHR11048">
    <property type="entry name" value="PRENYLTRANSFERASES"/>
    <property type="match status" value="1"/>
</dbReference>
<dbReference type="Pfam" id="PF01040">
    <property type="entry name" value="UbiA"/>
    <property type="match status" value="1"/>
</dbReference>
<dbReference type="PROSITE" id="PS00943">
    <property type="entry name" value="UBIA"/>
    <property type="match status" value="1"/>
</dbReference>
<gene>
    <name evidence="1" type="primary">ubiA</name>
    <name type="ordered locus">Bxeno_A0478</name>
    <name type="ORF">Bxe_A3983</name>
</gene>
<organism>
    <name type="scientific">Paraburkholderia xenovorans (strain LB400)</name>
    <dbReference type="NCBI Taxonomy" id="266265"/>
    <lineage>
        <taxon>Bacteria</taxon>
        <taxon>Pseudomonadati</taxon>
        <taxon>Pseudomonadota</taxon>
        <taxon>Betaproteobacteria</taxon>
        <taxon>Burkholderiales</taxon>
        <taxon>Burkholderiaceae</taxon>
        <taxon>Paraburkholderia</taxon>
    </lineage>
</organism>
<accession>Q145H3</accession>
<protein>
    <recommendedName>
        <fullName evidence="1">4-hydroxybenzoate octaprenyltransferase</fullName>
        <ecNumber evidence="1">2.5.1.39</ecNumber>
    </recommendedName>
    <alternativeName>
        <fullName evidence="1">4-HB polyprenyltransferase</fullName>
    </alternativeName>
</protein>
<proteinExistence type="inferred from homology"/>
<name>UBIA_PARXL</name>
<sequence length="287" mass="31755">MFARLPLYLRLVRMDKPIGSLLLLWPTLNALWIASDGRPSLPLLVIFTVGTVLMRSAGCAINDYADRDFDRYVRRTENRPITSGKIRAWEAVALAAALSLLAFLLILPLNALTKELSVAALFVAGSYPFTKRFFAIPQAYLGIAFGFGIPMAFAAIQNHVPMLAWVMLLANVFWSVAYDTEYAMVDRDDDIKIGIRTSALTFGRFDVAAIMLCYAVTLGIYVGIGVLLGFGALYWLGWAAAAGCAIYHYTLIRNRERMACFAAFRHNNWLGGALFAGIAAHYAATWF</sequence>
<evidence type="ECO:0000255" key="1">
    <source>
        <dbReference type="HAMAP-Rule" id="MF_01635"/>
    </source>
</evidence>
<reference key="1">
    <citation type="journal article" date="2006" name="Proc. Natl. Acad. Sci. U.S.A.">
        <title>Burkholderia xenovorans LB400 harbors a multi-replicon, 9.73-Mbp genome shaped for versatility.</title>
        <authorList>
            <person name="Chain P.S.G."/>
            <person name="Denef V.J."/>
            <person name="Konstantinidis K.T."/>
            <person name="Vergez L.M."/>
            <person name="Agullo L."/>
            <person name="Reyes V.L."/>
            <person name="Hauser L."/>
            <person name="Cordova M."/>
            <person name="Gomez L."/>
            <person name="Gonzalez M."/>
            <person name="Land M."/>
            <person name="Lao V."/>
            <person name="Larimer F."/>
            <person name="LiPuma J.J."/>
            <person name="Mahenthiralingam E."/>
            <person name="Malfatti S.A."/>
            <person name="Marx C.J."/>
            <person name="Parnell J.J."/>
            <person name="Ramette A."/>
            <person name="Richardson P."/>
            <person name="Seeger M."/>
            <person name="Smith D."/>
            <person name="Spilker T."/>
            <person name="Sul W.J."/>
            <person name="Tsoi T.V."/>
            <person name="Ulrich L.E."/>
            <person name="Zhulin I.B."/>
            <person name="Tiedje J.M."/>
        </authorList>
    </citation>
    <scope>NUCLEOTIDE SEQUENCE [LARGE SCALE GENOMIC DNA]</scope>
    <source>
        <strain>LB400</strain>
    </source>
</reference>
<comment type="function">
    <text evidence="1">Catalyzes the prenylation of para-hydroxybenzoate (PHB) with an all-trans polyprenyl group. Mediates the second step in the final reaction sequence of ubiquinone-8 (UQ-8) biosynthesis, which is the condensation of the polyisoprenoid side chain with PHB, generating the first membrane-bound Q intermediate 3-octaprenyl-4-hydroxybenzoate.</text>
</comment>
<comment type="catalytic activity">
    <reaction evidence="1">
        <text>all-trans-octaprenyl diphosphate + 4-hydroxybenzoate = 4-hydroxy-3-(all-trans-octaprenyl)benzoate + diphosphate</text>
        <dbReference type="Rhea" id="RHEA:27782"/>
        <dbReference type="ChEBI" id="CHEBI:1617"/>
        <dbReference type="ChEBI" id="CHEBI:17879"/>
        <dbReference type="ChEBI" id="CHEBI:33019"/>
        <dbReference type="ChEBI" id="CHEBI:57711"/>
        <dbReference type="EC" id="2.5.1.39"/>
    </reaction>
</comment>
<comment type="cofactor">
    <cofactor evidence="1">
        <name>Mg(2+)</name>
        <dbReference type="ChEBI" id="CHEBI:18420"/>
    </cofactor>
</comment>
<comment type="pathway">
    <text evidence="1">Cofactor biosynthesis; ubiquinone biosynthesis.</text>
</comment>
<comment type="subcellular location">
    <subcellularLocation>
        <location evidence="1">Cell inner membrane</location>
        <topology evidence="1">Multi-pass membrane protein</topology>
    </subcellularLocation>
</comment>
<comment type="similarity">
    <text evidence="1">Belongs to the UbiA prenyltransferase family.</text>
</comment>